<accession>P84779</accession>
<protein>
    <recommendedName>
        <fullName>Trypsin inhibitor 1</fullName>
    </recommendedName>
    <alternativeName>
        <fullName>SOTI I</fullName>
    </alternativeName>
    <alternativeName>
        <fullName>Trypsin inhibitor I</fullName>
    </alternativeName>
</protein>
<sequence>KCSPSGAICSGFGPPEQCCSGACVPHPILRIFVCQ</sequence>
<dbReference type="SMR" id="P84779"/>
<dbReference type="Proteomes" id="UP001155700">
    <property type="component" value="Unplaced"/>
</dbReference>
<dbReference type="GO" id="GO:0004867">
    <property type="term" value="F:serine-type endopeptidase inhibitor activity"/>
    <property type="evidence" value="ECO:0007669"/>
    <property type="project" value="UniProtKB-KW"/>
</dbReference>
<dbReference type="InterPro" id="IPR040875">
    <property type="entry name" value="Tryp_inh"/>
</dbReference>
<dbReference type="Pfam" id="PF17983">
    <property type="entry name" value="Tryp_inh"/>
    <property type="match status" value="1"/>
</dbReference>
<feature type="peptide" id="PRO_0000292937" description="Trypsin inhibitor 1">
    <location>
        <begin position="1"/>
        <end position="35"/>
    </location>
</feature>
<feature type="site" description="Reactive bond for trypsin" evidence="1">
    <location>
        <begin position="30"/>
        <end position="31"/>
    </location>
</feature>
<feature type="disulfide bond" evidence="1">
    <location>
        <begin position="2"/>
        <end position="19"/>
    </location>
</feature>
<feature type="disulfide bond" evidence="1">
    <location>
        <begin position="9"/>
        <end position="23"/>
    </location>
</feature>
<feature type="disulfide bond" evidence="1">
    <location>
        <begin position="18"/>
        <end position="34"/>
    </location>
</feature>
<organism>
    <name type="scientific">Spinacia oleracea</name>
    <name type="common">Spinach</name>
    <dbReference type="NCBI Taxonomy" id="3562"/>
    <lineage>
        <taxon>Eukaryota</taxon>
        <taxon>Viridiplantae</taxon>
        <taxon>Streptophyta</taxon>
        <taxon>Embryophyta</taxon>
        <taxon>Tracheophyta</taxon>
        <taxon>Spermatophyta</taxon>
        <taxon>Magnoliopsida</taxon>
        <taxon>eudicotyledons</taxon>
        <taxon>Gunneridae</taxon>
        <taxon>Pentapetalae</taxon>
        <taxon>Caryophyllales</taxon>
        <taxon>Chenopodiaceae</taxon>
        <taxon>Chenopodioideae</taxon>
        <taxon>Anserineae</taxon>
        <taxon>Spinacia</taxon>
    </lineage>
</organism>
<evidence type="ECO:0000269" key="1">
    <source>
    </source>
</evidence>
<evidence type="ECO:0000305" key="2"/>
<reference evidence="2" key="1">
    <citation type="journal article" date="2007" name="Phytochemistry">
        <title>Trypsin inhibitors from the garden four o'clock (Mirabilis jalapa) and spinach (Spinacia oleracea) seeds: isolation, characterization and chemical synthesis.</title>
        <authorList>
            <person name="Kowalska J."/>
            <person name="Pszczola K."/>
            <person name="Wilimowska-Pelc A."/>
            <person name="Lorenc-Kubis I."/>
            <person name="Zuziak E."/>
            <person name="Lugowski M."/>
            <person name="Legowska A."/>
            <person name="Kwiatkowska A."/>
            <person name="Sleszynska M."/>
            <person name="Lesner A."/>
            <person name="Walewska A."/>
            <person name="Zablotna E."/>
            <person name="Rolka K."/>
            <person name="Wilusz T."/>
        </authorList>
    </citation>
    <scope>PROTEIN SEQUENCE</scope>
    <scope>FUNCTION</scope>
    <scope>MASS SPECTROMETRY</scope>
    <scope>REACTIVE BOND</scope>
    <scope>DISULFIDE BONDS</scope>
    <source>
        <tissue evidence="1">Seed</tissue>
    </source>
</reference>
<name>ITR1_SPIOL</name>
<comment type="function">
    <text evidence="1">Trypsin inhibitor.</text>
</comment>
<comment type="domain">
    <text>The presence of a 'disulfide through disulfide knot' structurally defines this protein as a knottin.</text>
</comment>
<comment type="mass spectrometry"/>
<comment type="mass spectrometry"/>
<comment type="similarity">
    <text evidence="1">Belongs to the Mirabilis serine proteinase inhibitor family.</text>
</comment>
<keyword id="KW-0903">Direct protein sequencing</keyword>
<keyword id="KW-1015">Disulfide bond</keyword>
<keyword id="KW-0960">Knottin</keyword>
<keyword id="KW-0646">Protease inhibitor</keyword>
<keyword id="KW-1185">Reference proteome</keyword>
<keyword id="KW-0722">Serine protease inhibitor</keyword>
<proteinExistence type="evidence at protein level"/>